<gene>
    <name type="primary">yedP</name>
    <name type="ordered locus">UTI89_C2156</name>
</gene>
<organism>
    <name type="scientific">Escherichia coli (strain UTI89 / UPEC)</name>
    <dbReference type="NCBI Taxonomy" id="364106"/>
    <lineage>
        <taxon>Bacteria</taxon>
        <taxon>Pseudomonadati</taxon>
        <taxon>Pseudomonadota</taxon>
        <taxon>Gammaproteobacteria</taxon>
        <taxon>Enterobacterales</taxon>
        <taxon>Enterobacteriaceae</taxon>
        <taxon>Escherichia</taxon>
    </lineage>
</organism>
<feature type="chain" id="PRO_0000273957" description="Mannosyl-3-phosphoglycerate phosphatase">
    <location>
        <begin position="1"/>
        <end position="271"/>
    </location>
</feature>
<feature type="active site" description="Nucleophile" evidence="1">
    <location>
        <position position="13"/>
    </location>
</feature>
<feature type="binding site" evidence="1">
    <location>
        <position position="13"/>
    </location>
    <ligand>
        <name>Mg(2+)</name>
        <dbReference type="ChEBI" id="CHEBI:18420"/>
    </ligand>
</feature>
<feature type="binding site" evidence="1">
    <location>
        <position position="15"/>
    </location>
    <ligand>
        <name>Mg(2+)</name>
        <dbReference type="ChEBI" id="CHEBI:18420"/>
    </ligand>
</feature>
<feature type="binding site" evidence="1">
    <location>
        <position position="214"/>
    </location>
    <ligand>
        <name>Mg(2+)</name>
        <dbReference type="ChEBI" id="CHEBI:18420"/>
    </ligand>
</feature>
<sequence length="271" mass="30396">MLSIQQPLLVFSDLDGTLLDSHSYDWQPAAPWLSRLREANVPVILCSSKTSAEMLYLQKTLGLQGLPLIAENGAVIQLAEQWQDIDGFPRIISGISHGEISQVLNTLREKEHFKFTTFDDVDDATIAEWTGLSRSQAALTQLHEASVTLIWRDSDERMAQFTARLNELGLQFMQGARFWHVLDASAGKDQAANWIIATYQQSSGKRPTTLGLGDGPNDAPLLEVMDYAVIVKGLNREGVHLHDEDPTRVWRTQREGPEGWREGLDHFFSAR</sequence>
<reference key="1">
    <citation type="journal article" date="2006" name="Proc. Natl. Acad. Sci. U.S.A.">
        <title>Identification of genes subject to positive selection in uropathogenic strains of Escherichia coli: a comparative genomics approach.</title>
        <authorList>
            <person name="Chen S.L."/>
            <person name="Hung C.-S."/>
            <person name="Xu J."/>
            <person name="Reigstad C.S."/>
            <person name="Magrini V."/>
            <person name="Sabo A."/>
            <person name="Blasiar D."/>
            <person name="Bieri T."/>
            <person name="Meyer R.R."/>
            <person name="Ozersky P."/>
            <person name="Armstrong J.R."/>
            <person name="Fulton R.S."/>
            <person name="Latreille J.P."/>
            <person name="Spieth J."/>
            <person name="Hooton T.M."/>
            <person name="Mardis E.R."/>
            <person name="Hultgren S.J."/>
            <person name="Gordon J.I."/>
        </authorList>
    </citation>
    <scope>NUCLEOTIDE SEQUENCE [LARGE SCALE GENOMIC DNA]</scope>
    <source>
        <strain>UTI89 / UPEC</strain>
    </source>
</reference>
<name>MPGP_ECOUT</name>
<proteinExistence type="inferred from homology"/>
<protein>
    <recommendedName>
        <fullName evidence="1">Mannosyl-3-phosphoglycerate phosphatase</fullName>
        <shortName evidence="1">MPGP</shortName>
        <ecNumber evidence="1">3.1.3.70</ecNumber>
    </recommendedName>
</protein>
<comment type="catalytic activity">
    <reaction evidence="1">
        <text>2-O-(alpha-D-mannosyl)-3-phosphoglycerate + H2O = (2R)-2-O-(alpha-D-mannosyl)-glycerate + phosphate</text>
        <dbReference type="Rhea" id="RHEA:19309"/>
        <dbReference type="ChEBI" id="CHEBI:15377"/>
        <dbReference type="ChEBI" id="CHEBI:43474"/>
        <dbReference type="ChEBI" id="CHEBI:57541"/>
        <dbReference type="ChEBI" id="CHEBI:57744"/>
        <dbReference type="EC" id="3.1.3.70"/>
    </reaction>
</comment>
<comment type="cofactor">
    <cofactor evidence="1">
        <name>Mg(2+)</name>
        <dbReference type="ChEBI" id="CHEBI:18420"/>
    </cofactor>
</comment>
<comment type="subcellular location">
    <subcellularLocation>
        <location evidence="1">Cytoplasm</location>
    </subcellularLocation>
</comment>
<comment type="similarity">
    <text evidence="1">Belongs to the HAD-like hydrolase superfamily. MPGP family.</text>
</comment>
<keyword id="KW-0963">Cytoplasm</keyword>
<keyword id="KW-0378">Hydrolase</keyword>
<keyword id="KW-0460">Magnesium</keyword>
<keyword id="KW-0479">Metal-binding</keyword>
<accession>Q1RAI5</accession>
<evidence type="ECO:0000255" key="1">
    <source>
        <dbReference type="HAMAP-Rule" id="MF_00617"/>
    </source>
</evidence>
<dbReference type="EC" id="3.1.3.70" evidence="1"/>
<dbReference type="EMBL" id="CP000243">
    <property type="protein sequence ID" value="ABE07629.1"/>
    <property type="molecule type" value="Genomic_DNA"/>
</dbReference>
<dbReference type="RefSeq" id="WP_000949113.1">
    <property type="nucleotide sequence ID" value="NZ_CP064825.1"/>
</dbReference>
<dbReference type="SMR" id="Q1RAI5"/>
<dbReference type="KEGG" id="eci:UTI89_C2156"/>
<dbReference type="HOGENOM" id="CLU_063016_1_0_6"/>
<dbReference type="Proteomes" id="UP000001952">
    <property type="component" value="Chromosome"/>
</dbReference>
<dbReference type="GO" id="GO:0005829">
    <property type="term" value="C:cytosol"/>
    <property type="evidence" value="ECO:0007669"/>
    <property type="project" value="TreeGrafter"/>
</dbReference>
<dbReference type="GO" id="GO:0000287">
    <property type="term" value="F:magnesium ion binding"/>
    <property type="evidence" value="ECO:0007669"/>
    <property type="project" value="UniProtKB-ARBA"/>
</dbReference>
<dbReference type="GO" id="GO:0050531">
    <property type="term" value="F:mannosyl-3-phosphoglycerate phosphatase activity"/>
    <property type="evidence" value="ECO:0007669"/>
    <property type="project" value="UniProtKB-UniRule"/>
</dbReference>
<dbReference type="GO" id="GO:0051479">
    <property type="term" value="P:mannosylglycerate biosynthetic process"/>
    <property type="evidence" value="ECO:0007669"/>
    <property type="project" value="InterPro"/>
</dbReference>
<dbReference type="CDD" id="cd07507">
    <property type="entry name" value="HAD_Pase"/>
    <property type="match status" value="1"/>
</dbReference>
<dbReference type="Gene3D" id="3.40.50.1000">
    <property type="entry name" value="HAD superfamily/HAD-like"/>
    <property type="match status" value="1"/>
</dbReference>
<dbReference type="Gene3D" id="3.30.980.20">
    <property type="entry name" value="Putative mannosyl-3-phosphoglycerate phosphatase, domain 2"/>
    <property type="match status" value="1"/>
</dbReference>
<dbReference type="HAMAP" id="MF_00617">
    <property type="entry name" value="MPGP_rel"/>
    <property type="match status" value="1"/>
</dbReference>
<dbReference type="InterPro" id="IPR036412">
    <property type="entry name" value="HAD-like_sf"/>
</dbReference>
<dbReference type="InterPro" id="IPR006381">
    <property type="entry name" value="HAD-SF-IIB-MPGP"/>
</dbReference>
<dbReference type="InterPro" id="IPR006379">
    <property type="entry name" value="HAD-SF_hydro_IIB"/>
</dbReference>
<dbReference type="InterPro" id="IPR023214">
    <property type="entry name" value="HAD_sf"/>
</dbReference>
<dbReference type="InterPro" id="IPR012815">
    <property type="entry name" value="MPG_Pase"/>
</dbReference>
<dbReference type="NCBIfam" id="TIGR01484">
    <property type="entry name" value="HAD-SF-IIB"/>
    <property type="match status" value="1"/>
</dbReference>
<dbReference type="NCBIfam" id="TIGR01486">
    <property type="entry name" value="HAD-SF-IIB-MPGP"/>
    <property type="match status" value="1"/>
</dbReference>
<dbReference type="NCBIfam" id="TIGR02463">
    <property type="entry name" value="MPGP_rel"/>
    <property type="match status" value="1"/>
</dbReference>
<dbReference type="NCBIfam" id="NF002976">
    <property type="entry name" value="PRK03669.1"/>
    <property type="match status" value="1"/>
</dbReference>
<dbReference type="PANTHER" id="PTHR10000:SF8">
    <property type="entry name" value="HAD SUPERFAMILY HYDROLASE-LIKE, TYPE 3"/>
    <property type="match status" value="1"/>
</dbReference>
<dbReference type="PANTHER" id="PTHR10000">
    <property type="entry name" value="PHOSPHOSERINE PHOSPHATASE"/>
    <property type="match status" value="1"/>
</dbReference>
<dbReference type="Pfam" id="PF08282">
    <property type="entry name" value="Hydrolase_3"/>
    <property type="match status" value="1"/>
</dbReference>
<dbReference type="SFLD" id="SFLDG01142">
    <property type="entry name" value="C2.B.2:_Mannosyl-3-phosphoglyc"/>
    <property type="match status" value="1"/>
</dbReference>
<dbReference type="SFLD" id="SFLDG01140">
    <property type="entry name" value="C2.B:_Phosphomannomutase_and_P"/>
    <property type="match status" value="1"/>
</dbReference>
<dbReference type="SUPFAM" id="SSF56784">
    <property type="entry name" value="HAD-like"/>
    <property type="match status" value="1"/>
</dbReference>